<protein>
    <recommendedName>
        <fullName evidence="1">Peptidase T</fullName>
        <ecNumber evidence="1">3.4.11.4</ecNumber>
    </recommendedName>
    <alternativeName>
        <fullName evidence="1">Aminotripeptidase</fullName>
        <shortName evidence="1">Tripeptidase</shortName>
    </alternativeName>
    <alternativeName>
        <fullName evidence="1">Tripeptide aminopeptidase</fullName>
    </alternativeName>
</protein>
<proteinExistence type="inferred from homology"/>
<keyword id="KW-0031">Aminopeptidase</keyword>
<keyword id="KW-0963">Cytoplasm</keyword>
<keyword id="KW-0378">Hydrolase</keyword>
<keyword id="KW-0479">Metal-binding</keyword>
<keyword id="KW-0482">Metalloprotease</keyword>
<keyword id="KW-0645">Protease</keyword>
<keyword id="KW-1185">Reference proteome</keyword>
<keyword id="KW-0862">Zinc</keyword>
<reference key="1">
    <citation type="journal article" date="2000" name="Nature">
        <title>DNA sequence of both chromosomes of the cholera pathogen Vibrio cholerae.</title>
        <authorList>
            <person name="Heidelberg J.F."/>
            <person name="Eisen J.A."/>
            <person name="Nelson W.C."/>
            <person name="Clayton R.A."/>
            <person name="Gwinn M.L."/>
            <person name="Dodson R.J."/>
            <person name="Haft D.H."/>
            <person name="Hickey E.K."/>
            <person name="Peterson J.D."/>
            <person name="Umayam L.A."/>
            <person name="Gill S.R."/>
            <person name="Nelson K.E."/>
            <person name="Read T.D."/>
            <person name="Tettelin H."/>
            <person name="Richardson D.L."/>
            <person name="Ermolaeva M.D."/>
            <person name="Vamathevan J.J."/>
            <person name="Bass S."/>
            <person name="Qin H."/>
            <person name="Dragoi I."/>
            <person name="Sellers P."/>
            <person name="McDonald L.A."/>
            <person name="Utterback T.R."/>
            <person name="Fleischmann R.D."/>
            <person name="Nierman W.C."/>
            <person name="White O."/>
            <person name="Salzberg S.L."/>
            <person name="Smith H.O."/>
            <person name="Colwell R.R."/>
            <person name="Mekalanos J.J."/>
            <person name="Venter J.C."/>
            <person name="Fraser C.M."/>
        </authorList>
    </citation>
    <scope>NUCLEOTIDE SEQUENCE [LARGE SCALE GENOMIC DNA]</scope>
    <source>
        <strain>ATCC 39315 / El Tor Inaba N16961</strain>
    </source>
</reference>
<sequence length="410" mass="44930">MKNLVGRFMRYVTFDTQSKPKNHHCPSSTGQKVFAQALYEELLELGLSDVSLDDHGYVMAKLPSNVNYPVPAIGFIAHMDTSPDACGKHVKPQIVEDYQGGDIALGKGDEVLSPIQYPDLHLLHGYNLITTDGTTLLGADNKAGIAEIITAMEILLADPSIPHGDISIAFTPDEEIGRGANHFDVAKFAAQWAYTIDGGPIGELEYENFNAATATVVCHGVNVHPGTAKDKMVNAMHIAAQFILMMPENETPQHTEGYQGFYHLSGATMSVAKSELKYILRDFEAIGLQARQALMQAKVAELNQQLKKGRVEVSFEQSYSNMKEKVEPHPHIIELAKQAMVACDVEPKIKPIRGGTDGARLSFMGLPCPNIFTGGYNFHGIHEFITIEGMEAAVQVIVKLAEKTALHYRQ</sequence>
<accession>Q9KMY6</accession>
<name>PEPT_VIBCH</name>
<evidence type="ECO:0000255" key="1">
    <source>
        <dbReference type="HAMAP-Rule" id="MF_00550"/>
    </source>
</evidence>
<feature type="chain" id="PRO_0000185330" description="Peptidase T">
    <location>
        <begin position="1"/>
        <end position="410"/>
    </location>
</feature>
<feature type="active site" evidence="1">
    <location>
        <position position="80"/>
    </location>
</feature>
<feature type="active site" description="Proton acceptor" evidence="1">
    <location>
        <position position="174"/>
    </location>
</feature>
<feature type="binding site" evidence="1">
    <location>
        <position position="78"/>
    </location>
    <ligand>
        <name>Zn(2+)</name>
        <dbReference type="ChEBI" id="CHEBI:29105"/>
        <label>1</label>
    </ligand>
</feature>
<feature type="binding site" evidence="1">
    <location>
        <position position="140"/>
    </location>
    <ligand>
        <name>Zn(2+)</name>
        <dbReference type="ChEBI" id="CHEBI:29105"/>
        <label>1</label>
    </ligand>
</feature>
<feature type="binding site" evidence="1">
    <location>
        <position position="140"/>
    </location>
    <ligand>
        <name>Zn(2+)</name>
        <dbReference type="ChEBI" id="CHEBI:29105"/>
        <label>2</label>
    </ligand>
</feature>
<feature type="binding site" evidence="1">
    <location>
        <position position="175"/>
    </location>
    <ligand>
        <name>Zn(2+)</name>
        <dbReference type="ChEBI" id="CHEBI:29105"/>
        <label>2</label>
    </ligand>
</feature>
<feature type="binding site" evidence="1">
    <location>
        <position position="197"/>
    </location>
    <ligand>
        <name>Zn(2+)</name>
        <dbReference type="ChEBI" id="CHEBI:29105"/>
        <label>1</label>
    </ligand>
</feature>
<feature type="binding site" evidence="1">
    <location>
        <position position="379"/>
    </location>
    <ligand>
        <name>Zn(2+)</name>
        <dbReference type="ChEBI" id="CHEBI:29105"/>
        <label>2</label>
    </ligand>
</feature>
<organism>
    <name type="scientific">Vibrio cholerae serotype O1 (strain ATCC 39315 / El Tor Inaba N16961)</name>
    <dbReference type="NCBI Taxonomy" id="243277"/>
    <lineage>
        <taxon>Bacteria</taxon>
        <taxon>Pseudomonadati</taxon>
        <taxon>Pseudomonadota</taxon>
        <taxon>Gammaproteobacteria</taxon>
        <taxon>Vibrionales</taxon>
        <taxon>Vibrionaceae</taxon>
        <taxon>Vibrio</taxon>
    </lineage>
</organism>
<dbReference type="EC" id="3.4.11.4" evidence="1"/>
<dbReference type="EMBL" id="AE003853">
    <property type="protein sequence ID" value="AAF96093.1"/>
    <property type="molecule type" value="Genomic_DNA"/>
</dbReference>
<dbReference type="PIR" id="C82491">
    <property type="entry name" value="C82491"/>
</dbReference>
<dbReference type="RefSeq" id="NP_232580.1">
    <property type="nucleotide sequence ID" value="NC_002506.1"/>
</dbReference>
<dbReference type="RefSeq" id="WP_000793856.1">
    <property type="nucleotide sequence ID" value="NZ_LT906615.1"/>
</dbReference>
<dbReference type="SMR" id="Q9KMY6"/>
<dbReference type="STRING" id="243277.VC_A0180"/>
<dbReference type="MEROPS" id="M20.003"/>
<dbReference type="DNASU" id="2611863"/>
<dbReference type="EnsemblBacteria" id="AAF96093">
    <property type="protein sequence ID" value="AAF96093"/>
    <property type="gene ID" value="VC_A0180"/>
</dbReference>
<dbReference type="KEGG" id="vch:VC_A0180"/>
<dbReference type="PATRIC" id="fig|243277.26.peg.2818"/>
<dbReference type="eggNOG" id="COG2195">
    <property type="taxonomic scope" value="Bacteria"/>
</dbReference>
<dbReference type="HOGENOM" id="CLU_053676_0_0_6"/>
<dbReference type="Proteomes" id="UP000000584">
    <property type="component" value="Chromosome 2"/>
</dbReference>
<dbReference type="GO" id="GO:0005829">
    <property type="term" value="C:cytosol"/>
    <property type="evidence" value="ECO:0000318"/>
    <property type="project" value="GO_Central"/>
</dbReference>
<dbReference type="GO" id="GO:0008237">
    <property type="term" value="F:metallopeptidase activity"/>
    <property type="evidence" value="ECO:0007669"/>
    <property type="project" value="UniProtKB-KW"/>
</dbReference>
<dbReference type="GO" id="GO:0045148">
    <property type="term" value="F:tripeptide aminopeptidase activity"/>
    <property type="evidence" value="ECO:0000318"/>
    <property type="project" value="GO_Central"/>
</dbReference>
<dbReference type="GO" id="GO:0008270">
    <property type="term" value="F:zinc ion binding"/>
    <property type="evidence" value="ECO:0007669"/>
    <property type="project" value="UniProtKB-UniRule"/>
</dbReference>
<dbReference type="GO" id="GO:0043171">
    <property type="term" value="P:peptide catabolic process"/>
    <property type="evidence" value="ECO:0007669"/>
    <property type="project" value="UniProtKB-UniRule"/>
</dbReference>
<dbReference type="GO" id="GO:0006508">
    <property type="term" value="P:proteolysis"/>
    <property type="evidence" value="ECO:0007669"/>
    <property type="project" value="UniProtKB-UniRule"/>
</dbReference>
<dbReference type="CDD" id="cd03892">
    <property type="entry name" value="M20_peptT"/>
    <property type="match status" value="1"/>
</dbReference>
<dbReference type="Gene3D" id="3.30.70.360">
    <property type="match status" value="1"/>
</dbReference>
<dbReference type="Gene3D" id="3.40.630.10">
    <property type="entry name" value="Zn peptidases"/>
    <property type="match status" value="1"/>
</dbReference>
<dbReference type="HAMAP" id="MF_00550">
    <property type="entry name" value="Aminopeptidase_M20"/>
    <property type="match status" value="1"/>
</dbReference>
<dbReference type="InterPro" id="IPR001261">
    <property type="entry name" value="ArgE/DapE_CS"/>
</dbReference>
<dbReference type="InterPro" id="IPR036264">
    <property type="entry name" value="Bact_exopeptidase_dim_dom"/>
</dbReference>
<dbReference type="InterPro" id="IPR002933">
    <property type="entry name" value="Peptidase_M20"/>
</dbReference>
<dbReference type="InterPro" id="IPR011650">
    <property type="entry name" value="Peptidase_M20_dimer"/>
</dbReference>
<dbReference type="InterPro" id="IPR010161">
    <property type="entry name" value="Peptidase_M20B"/>
</dbReference>
<dbReference type="NCBIfam" id="TIGR01882">
    <property type="entry name" value="peptidase-T"/>
    <property type="match status" value="1"/>
</dbReference>
<dbReference type="NCBIfam" id="NF003976">
    <property type="entry name" value="PRK05469.1"/>
    <property type="match status" value="1"/>
</dbReference>
<dbReference type="NCBIfam" id="NF009920">
    <property type="entry name" value="PRK13381.1"/>
    <property type="match status" value="1"/>
</dbReference>
<dbReference type="PANTHER" id="PTHR42994">
    <property type="entry name" value="PEPTIDASE T"/>
    <property type="match status" value="1"/>
</dbReference>
<dbReference type="PANTHER" id="PTHR42994:SF1">
    <property type="entry name" value="PEPTIDASE T"/>
    <property type="match status" value="1"/>
</dbReference>
<dbReference type="Pfam" id="PF07687">
    <property type="entry name" value="M20_dimer"/>
    <property type="match status" value="1"/>
</dbReference>
<dbReference type="Pfam" id="PF01546">
    <property type="entry name" value="Peptidase_M20"/>
    <property type="match status" value="1"/>
</dbReference>
<dbReference type="PIRSF" id="PIRSF037215">
    <property type="entry name" value="Peptidase_M20B"/>
    <property type="match status" value="1"/>
</dbReference>
<dbReference type="SUPFAM" id="SSF55031">
    <property type="entry name" value="Bacterial exopeptidase dimerisation domain"/>
    <property type="match status" value="1"/>
</dbReference>
<dbReference type="SUPFAM" id="SSF53187">
    <property type="entry name" value="Zn-dependent exopeptidases"/>
    <property type="match status" value="1"/>
</dbReference>
<dbReference type="PROSITE" id="PS00758">
    <property type="entry name" value="ARGE_DAPE_CPG2_1"/>
    <property type="match status" value="1"/>
</dbReference>
<dbReference type="PROSITE" id="PS00759">
    <property type="entry name" value="ARGE_DAPE_CPG2_2"/>
    <property type="match status" value="1"/>
</dbReference>
<gene>
    <name evidence="1" type="primary">pepT</name>
    <name type="ordered locus">VC_A0180</name>
</gene>
<comment type="function">
    <text evidence="1">Cleaves the N-terminal amino acid of tripeptides.</text>
</comment>
<comment type="catalytic activity">
    <reaction evidence="1">
        <text>Release of the N-terminal residue from a tripeptide.</text>
        <dbReference type="EC" id="3.4.11.4"/>
    </reaction>
</comment>
<comment type="cofactor">
    <cofactor evidence="1">
        <name>Zn(2+)</name>
        <dbReference type="ChEBI" id="CHEBI:29105"/>
    </cofactor>
    <text evidence="1">Binds 2 Zn(2+) ions per subunit.</text>
</comment>
<comment type="subcellular location">
    <subcellularLocation>
        <location evidence="1">Cytoplasm</location>
    </subcellularLocation>
</comment>
<comment type="similarity">
    <text evidence="1">Belongs to the peptidase M20B family.</text>
</comment>